<dbReference type="EMBL" id="AE015925">
    <property type="protein sequence ID" value="AAP05662.1"/>
    <property type="molecule type" value="Genomic_DNA"/>
</dbReference>
<dbReference type="RefSeq" id="WP_011006875.1">
    <property type="nucleotide sequence ID" value="NC_003361.3"/>
</dbReference>
<dbReference type="SMR" id="Q821L7"/>
<dbReference type="STRING" id="227941.CCA_00923"/>
<dbReference type="KEGG" id="cca:CCA_00923"/>
<dbReference type="eggNOG" id="COG1160">
    <property type="taxonomic scope" value="Bacteria"/>
</dbReference>
<dbReference type="HOGENOM" id="CLU_016077_6_2_0"/>
<dbReference type="OrthoDB" id="9805918at2"/>
<dbReference type="Proteomes" id="UP000002193">
    <property type="component" value="Chromosome"/>
</dbReference>
<dbReference type="GO" id="GO:0005525">
    <property type="term" value="F:GTP binding"/>
    <property type="evidence" value="ECO:0007669"/>
    <property type="project" value="UniProtKB-UniRule"/>
</dbReference>
<dbReference type="GO" id="GO:0043022">
    <property type="term" value="F:ribosome binding"/>
    <property type="evidence" value="ECO:0007669"/>
    <property type="project" value="TreeGrafter"/>
</dbReference>
<dbReference type="GO" id="GO:0042254">
    <property type="term" value="P:ribosome biogenesis"/>
    <property type="evidence" value="ECO:0007669"/>
    <property type="project" value="UniProtKB-KW"/>
</dbReference>
<dbReference type="CDD" id="cd01894">
    <property type="entry name" value="EngA1"/>
    <property type="match status" value="1"/>
</dbReference>
<dbReference type="CDD" id="cd01895">
    <property type="entry name" value="EngA2"/>
    <property type="match status" value="1"/>
</dbReference>
<dbReference type="FunFam" id="3.40.50.300:FF:000040">
    <property type="entry name" value="GTPase Der"/>
    <property type="match status" value="1"/>
</dbReference>
<dbReference type="Gene3D" id="3.30.300.20">
    <property type="match status" value="1"/>
</dbReference>
<dbReference type="Gene3D" id="3.40.50.300">
    <property type="entry name" value="P-loop containing nucleotide triphosphate hydrolases"/>
    <property type="match status" value="2"/>
</dbReference>
<dbReference type="HAMAP" id="MF_00195">
    <property type="entry name" value="GTPase_Der"/>
    <property type="match status" value="1"/>
</dbReference>
<dbReference type="InterPro" id="IPR031166">
    <property type="entry name" value="G_ENGA"/>
</dbReference>
<dbReference type="InterPro" id="IPR006073">
    <property type="entry name" value="GTP-bd"/>
</dbReference>
<dbReference type="InterPro" id="IPR016484">
    <property type="entry name" value="GTPase_Der"/>
</dbReference>
<dbReference type="InterPro" id="IPR032859">
    <property type="entry name" value="KH_dom-like"/>
</dbReference>
<dbReference type="InterPro" id="IPR015946">
    <property type="entry name" value="KH_dom-like_a/b"/>
</dbReference>
<dbReference type="InterPro" id="IPR027417">
    <property type="entry name" value="P-loop_NTPase"/>
</dbReference>
<dbReference type="InterPro" id="IPR005225">
    <property type="entry name" value="Small_GTP-bd"/>
</dbReference>
<dbReference type="NCBIfam" id="TIGR03594">
    <property type="entry name" value="GTPase_EngA"/>
    <property type="match status" value="1"/>
</dbReference>
<dbReference type="NCBIfam" id="TIGR00231">
    <property type="entry name" value="small_GTP"/>
    <property type="match status" value="2"/>
</dbReference>
<dbReference type="PANTHER" id="PTHR43834">
    <property type="entry name" value="GTPASE DER"/>
    <property type="match status" value="1"/>
</dbReference>
<dbReference type="PANTHER" id="PTHR43834:SF6">
    <property type="entry name" value="GTPASE DER"/>
    <property type="match status" value="1"/>
</dbReference>
<dbReference type="Pfam" id="PF14714">
    <property type="entry name" value="KH_dom-like"/>
    <property type="match status" value="1"/>
</dbReference>
<dbReference type="Pfam" id="PF01926">
    <property type="entry name" value="MMR_HSR1"/>
    <property type="match status" value="2"/>
</dbReference>
<dbReference type="PIRSF" id="PIRSF006485">
    <property type="entry name" value="GTP-binding_EngA"/>
    <property type="match status" value="1"/>
</dbReference>
<dbReference type="PRINTS" id="PR00326">
    <property type="entry name" value="GTP1OBG"/>
</dbReference>
<dbReference type="SUPFAM" id="SSF52540">
    <property type="entry name" value="P-loop containing nucleoside triphosphate hydrolases"/>
    <property type="match status" value="2"/>
</dbReference>
<dbReference type="PROSITE" id="PS51712">
    <property type="entry name" value="G_ENGA"/>
    <property type="match status" value="2"/>
</dbReference>
<feature type="chain" id="PRO_0000178978" description="GTPase Der">
    <location>
        <begin position="1"/>
        <end position="474"/>
    </location>
</feature>
<feature type="domain" description="EngA-type G 1">
    <location>
        <begin position="2"/>
        <end position="166"/>
    </location>
</feature>
<feature type="domain" description="EngA-type G 2">
    <location>
        <begin position="212"/>
        <end position="385"/>
    </location>
</feature>
<feature type="domain" description="KH-like" evidence="1">
    <location>
        <begin position="386"/>
        <end position="470"/>
    </location>
</feature>
<feature type="binding site" evidence="1">
    <location>
        <begin position="8"/>
        <end position="15"/>
    </location>
    <ligand>
        <name>GTP</name>
        <dbReference type="ChEBI" id="CHEBI:37565"/>
        <label>1</label>
    </ligand>
</feature>
<feature type="binding site" evidence="1">
    <location>
        <begin position="55"/>
        <end position="59"/>
    </location>
    <ligand>
        <name>GTP</name>
        <dbReference type="ChEBI" id="CHEBI:37565"/>
        <label>1</label>
    </ligand>
</feature>
<feature type="binding site" evidence="1">
    <location>
        <begin position="118"/>
        <end position="121"/>
    </location>
    <ligand>
        <name>GTP</name>
        <dbReference type="ChEBI" id="CHEBI:37565"/>
        <label>1</label>
    </ligand>
</feature>
<feature type="binding site" evidence="1">
    <location>
        <begin position="218"/>
        <end position="225"/>
    </location>
    <ligand>
        <name>GTP</name>
        <dbReference type="ChEBI" id="CHEBI:37565"/>
        <label>2</label>
    </ligand>
</feature>
<feature type="binding site" evidence="1">
    <location>
        <begin position="265"/>
        <end position="269"/>
    </location>
    <ligand>
        <name>GTP</name>
        <dbReference type="ChEBI" id="CHEBI:37565"/>
        <label>2</label>
    </ligand>
</feature>
<feature type="binding site" evidence="1">
    <location>
        <begin position="330"/>
        <end position="333"/>
    </location>
    <ligand>
        <name>GTP</name>
        <dbReference type="ChEBI" id="CHEBI:37565"/>
        <label>2</label>
    </ligand>
</feature>
<evidence type="ECO:0000255" key="1">
    <source>
        <dbReference type="HAMAP-Rule" id="MF_00195"/>
    </source>
</evidence>
<proteinExistence type="inferred from homology"/>
<keyword id="KW-0342">GTP-binding</keyword>
<keyword id="KW-0547">Nucleotide-binding</keyword>
<keyword id="KW-0677">Repeat</keyword>
<keyword id="KW-0690">Ribosome biogenesis</keyword>
<accession>Q821L7</accession>
<sequence>MLRIAILGRPNVGKSSLFNRMCKRSLAIVNSQEGTTRDRLYGEIRGWSVPVQVIDTGGVDKDSEDHFQKHIYKQALAGANEADILLLVVDIRCGITEQDAELAKMLLPLNKPLILVANKADTFKDEHRIHELYKLGISEILAVSASHDKHIDKLLQRIKTLGNVPEVVEEFSEEEVEEEAVPSMELLSKEPLSDYEEEEIPFSTTSAPDKPLKIALIGRPNVGKSSIINGLLNEERCIIDNVPGTTRDNVDILYSHNDRSYLFIDTAGLRKMKSVKNSIEWISSSRTEKAIARADVCLLVIDAQHHLSSYDKRILSLISKHKKPHIILVNKWDLIEGVRMEHYIRDLRATDVYIGQSRILCISAATKRNLRHIFSSIDELYETVSSKVPTPVVNKTLASTLQKHHPQVINGRRLRIYYAIHKTATPFQFLLFINAKSLLTKHYECYLRNTLKSSFNLYGIPFDLEFKEKTKRTN</sequence>
<protein>
    <recommendedName>
        <fullName evidence="1">GTPase Der</fullName>
    </recommendedName>
    <alternativeName>
        <fullName evidence="1">GTP-binding protein EngA</fullName>
    </alternativeName>
</protein>
<organism>
    <name type="scientific">Chlamydia caviae (strain ATCC VR-813 / DSM 19441 / 03DC25 / GPIC)</name>
    <name type="common">Chlamydophila caviae</name>
    <dbReference type="NCBI Taxonomy" id="227941"/>
    <lineage>
        <taxon>Bacteria</taxon>
        <taxon>Pseudomonadati</taxon>
        <taxon>Chlamydiota</taxon>
        <taxon>Chlamydiia</taxon>
        <taxon>Chlamydiales</taxon>
        <taxon>Chlamydiaceae</taxon>
        <taxon>Chlamydia/Chlamydophila group</taxon>
        <taxon>Chlamydia</taxon>
    </lineage>
</organism>
<name>DER_CHLCV</name>
<comment type="function">
    <text evidence="1">GTPase that plays an essential role in the late steps of ribosome biogenesis.</text>
</comment>
<comment type="subunit">
    <text evidence="1">Associates with the 50S ribosomal subunit.</text>
</comment>
<comment type="similarity">
    <text evidence="1">Belongs to the TRAFAC class TrmE-Era-EngA-EngB-Septin-like GTPase superfamily. EngA (Der) GTPase family.</text>
</comment>
<gene>
    <name evidence="1" type="primary">der</name>
    <name type="synonym">engA</name>
    <name type="ordered locus">CCA_00923</name>
</gene>
<reference key="1">
    <citation type="journal article" date="2003" name="Nucleic Acids Res.">
        <title>Genome sequence of Chlamydophila caviae (Chlamydia psittaci GPIC): examining the role of niche-specific genes in the evolution of the Chlamydiaceae.</title>
        <authorList>
            <person name="Read T.D."/>
            <person name="Myers G.S.A."/>
            <person name="Brunham R.C."/>
            <person name="Nelson W.C."/>
            <person name="Paulsen I.T."/>
            <person name="Heidelberg J.F."/>
            <person name="Holtzapple E.K."/>
            <person name="Khouri H.M."/>
            <person name="Federova N.B."/>
            <person name="Carty H.A."/>
            <person name="Umayam L.A."/>
            <person name="Haft D.H."/>
            <person name="Peterson J.D."/>
            <person name="Beanan M.J."/>
            <person name="White O."/>
            <person name="Salzberg S.L."/>
            <person name="Hsia R.-C."/>
            <person name="McClarty G."/>
            <person name="Rank R.G."/>
            <person name="Bavoil P.M."/>
            <person name="Fraser C.M."/>
        </authorList>
    </citation>
    <scope>NUCLEOTIDE SEQUENCE [LARGE SCALE GENOMIC DNA]</scope>
    <source>
        <strain>ATCC VR-813 / DSM 19441 / 03DC25 / GPIC</strain>
    </source>
</reference>